<protein>
    <recommendedName>
        <fullName evidence="1">ATP synthase subunit delta</fullName>
    </recommendedName>
    <alternativeName>
        <fullName evidence="1">ATP synthase F(1) sector subunit delta</fullName>
    </alternativeName>
    <alternativeName>
        <fullName evidence="1">F-type ATPase subunit delta</fullName>
        <shortName evidence="1">F-ATPase subunit delta</shortName>
    </alternativeName>
</protein>
<evidence type="ECO:0000255" key="1">
    <source>
        <dbReference type="HAMAP-Rule" id="MF_01416"/>
    </source>
</evidence>
<accession>P43717</accession>
<organism>
    <name type="scientific">Haemophilus influenzae (strain ATCC 51907 / DSM 11121 / KW20 / Rd)</name>
    <dbReference type="NCBI Taxonomy" id="71421"/>
    <lineage>
        <taxon>Bacteria</taxon>
        <taxon>Pseudomonadati</taxon>
        <taxon>Pseudomonadota</taxon>
        <taxon>Gammaproteobacteria</taxon>
        <taxon>Pasteurellales</taxon>
        <taxon>Pasteurellaceae</taxon>
        <taxon>Haemophilus</taxon>
    </lineage>
</organism>
<feature type="chain" id="PRO_0000193465" description="ATP synthase subunit delta">
    <location>
        <begin position="1"/>
        <end position="177"/>
    </location>
</feature>
<proteinExistence type="inferred from homology"/>
<name>ATPD_HAEIN</name>
<dbReference type="EMBL" id="L42023">
    <property type="protein sequence ID" value="AAC22140.1"/>
    <property type="molecule type" value="Genomic_DNA"/>
</dbReference>
<dbReference type="PIR" id="G64071">
    <property type="entry name" value="G64071"/>
</dbReference>
<dbReference type="RefSeq" id="NP_438642.1">
    <property type="nucleotide sequence ID" value="NC_000907.1"/>
</dbReference>
<dbReference type="SMR" id="P43717"/>
<dbReference type="STRING" id="71421.HI_0482"/>
<dbReference type="EnsemblBacteria" id="AAC22140">
    <property type="protein sequence ID" value="AAC22140"/>
    <property type="gene ID" value="HI_0482"/>
</dbReference>
<dbReference type="KEGG" id="hin:HI_0482"/>
<dbReference type="PATRIC" id="fig|71421.8.peg.501"/>
<dbReference type="eggNOG" id="COG0712">
    <property type="taxonomic scope" value="Bacteria"/>
</dbReference>
<dbReference type="HOGENOM" id="CLU_085114_3_0_6"/>
<dbReference type="OrthoDB" id="9816221at2"/>
<dbReference type="PhylomeDB" id="P43717"/>
<dbReference type="BioCyc" id="HINF71421:G1GJ1-497-MONOMER"/>
<dbReference type="Proteomes" id="UP000000579">
    <property type="component" value="Chromosome"/>
</dbReference>
<dbReference type="GO" id="GO:0005886">
    <property type="term" value="C:plasma membrane"/>
    <property type="evidence" value="ECO:0007669"/>
    <property type="project" value="UniProtKB-SubCell"/>
</dbReference>
<dbReference type="GO" id="GO:0045259">
    <property type="term" value="C:proton-transporting ATP synthase complex"/>
    <property type="evidence" value="ECO:0007669"/>
    <property type="project" value="UniProtKB-KW"/>
</dbReference>
<dbReference type="GO" id="GO:0046933">
    <property type="term" value="F:proton-transporting ATP synthase activity, rotational mechanism"/>
    <property type="evidence" value="ECO:0007669"/>
    <property type="project" value="UniProtKB-UniRule"/>
</dbReference>
<dbReference type="GO" id="GO:0015986">
    <property type="term" value="P:proton motive force-driven ATP synthesis"/>
    <property type="evidence" value="ECO:0000318"/>
    <property type="project" value="GO_Central"/>
</dbReference>
<dbReference type="Gene3D" id="1.10.520.20">
    <property type="entry name" value="N-terminal domain of the delta subunit of the F1F0-ATP synthase"/>
    <property type="match status" value="1"/>
</dbReference>
<dbReference type="HAMAP" id="MF_01416">
    <property type="entry name" value="ATP_synth_delta_bact"/>
    <property type="match status" value="1"/>
</dbReference>
<dbReference type="InterPro" id="IPR026015">
    <property type="entry name" value="ATP_synth_OSCP/delta_N_sf"/>
</dbReference>
<dbReference type="InterPro" id="IPR020781">
    <property type="entry name" value="ATPase_OSCP/d_CS"/>
</dbReference>
<dbReference type="InterPro" id="IPR000711">
    <property type="entry name" value="ATPase_OSCP/dsu"/>
</dbReference>
<dbReference type="NCBIfam" id="TIGR01145">
    <property type="entry name" value="ATP_synt_delta"/>
    <property type="match status" value="1"/>
</dbReference>
<dbReference type="NCBIfam" id="NF004402">
    <property type="entry name" value="PRK05758.2-2"/>
    <property type="match status" value="1"/>
</dbReference>
<dbReference type="NCBIfam" id="NF004404">
    <property type="entry name" value="PRK05758.2-5"/>
    <property type="match status" value="1"/>
</dbReference>
<dbReference type="PANTHER" id="PTHR11910">
    <property type="entry name" value="ATP SYNTHASE DELTA CHAIN"/>
    <property type="match status" value="1"/>
</dbReference>
<dbReference type="Pfam" id="PF00213">
    <property type="entry name" value="OSCP"/>
    <property type="match status" value="1"/>
</dbReference>
<dbReference type="PRINTS" id="PR00125">
    <property type="entry name" value="ATPASEDELTA"/>
</dbReference>
<dbReference type="SUPFAM" id="SSF47928">
    <property type="entry name" value="N-terminal domain of the delta subunit of the F1F0-ATP synthase"/>
    <property type="match status" value="1"/>
</dbReference>
<dbReference type="PROSITE" id="PS00389">
    <property type="entry name" value="ATPASE_DELTA"/>
    <property type="match status" value="1"/>
</dbReference>
<reference key="1">
    <citation type="journal article" date="1995" name="Science">
        <title>Whole-genome random sequencing and assembly of Haemophilus influenzae Rd.</title>
        <authorList>
            <person name="Fleischmann R.D."/>
            <person name="Adams M.D."/>
            <person name="White O."/>
            <person name="Clayton R.A."/>
            <person name="Kirkness E.F."/>
            <person name="Kerlavage A.R."/>
            <person name="Bult C.J."/>
            <person name="Tomb J.-F."/>
            <person name="Dougherty B.A."/>
            <person name="Merrick J.M."/>
            <person name="McKenney K."/>
            <person name="Sutton G.G."/>
            <person name="FitzHugh W."/>
            <person name="Fields C.A."/>
            <person name="Gocayne J.D."/>
            <person name="Scott J.D."/>
            <person name="Shirley R."/>
            <person name="Liu L.-I."/>
            <person name="Glodek A."/>
            <person name="Kelley J.M."/>
            <person name="Weidman J.F."/>
            <person name="Phillips C.A."/>
            <person name="Spriggs T."/>
            <person name="Hedblom E."/>
            <person name="Cotton M.D."/>
            <person name="Utterback T.R."/>
            <person name="Hanna M.C."/>
            <person name="Nguyen D.T."/>
            <person name="Saudek D.M."/>
            <person name="Brandon R.C."/>
            <person name="Fine L.D."/>
            <person name="Fritchman J.L."/>
            <person name="Fuhrmann J.L."/>
            <person name="Geoghagen N.S.M."/>
            <person name="Gnehm C.L."/>
            <person name="McDonald L.A."/>
            <person name="Small K.V."/>
            <person name="Fraser C.M."/>
            <person name="Smith H.O."/>
            <person name="Venter J.C."/>
        </authorList>
    </citation>
    <scope>NUCLEOTIDE SEQUENCE [LARGE SCALE GENOMIC DNA]</scope>
    <source>
        <strain>ATCC 51907 / DSM 11121 / KW20 / Rd</strain>
    </source>
</reference>
<comment type="function">
    <text evidence="1">F(1)F(0) ATP synthase produces ATP from ADP in the presence of a proton or sodium gradient. F-type ATPases consist of two structural domains, F(1) containing the extramembraneous catalytic core and F(0) containing the membrane proton channel, linked together by a central stalk and a peripheral stalk. During catalysis, ATP synthesis in the catalytic domain of F(1) is coupled via a rotary mechanism of the central stalk subunits to proton translocation.</text>
</comment>
<comment type="function">
    <text evidence="1">This protein is part of the stalk that links CF(0) to CF(1). It either transmits conformational changes from CF(0) to CF(1) or is implicated in proton conduction.</text>
</comment>
<comment type="subunit">
    <text evidence="1">F-type ATPases have 2 components, F(1) - the catalytic core - and F(0) - the membrane proton channel. F(1) has five subunits: alpha(3), beta(3), gamma(1), delta(1), epsilon(1). F(0) has three main subunits: a(1), b(2) and c(10-14). The alpha and beta chains form an alternating ring which encloses part of the gamma chain. F(1) is attached to F(0) by a central stalk formed by the gamma and epsilon chains, while a peripheral stalk is formed by the delta and b chains.</text>
</comment>
<comment type="subcellular location">
    <subcellularLocation>
        <location evidence="1">Cell inner membrane</location>
        <topology evidence="1">Peripheral membrane protein</topology>
    </subcellularLocation>
</comment>
<comment type="similarity">
    <text evidence="1">Belongs to the ATPase delta chain family.</text>
</comment>
<sequence length="177" mass="19451">MSELTTIARPYAKAAFDFAIEQSAVEKWTEMLGFAAAVAEDETVKAYLSSSLSAQKLADTVISICGEQLDQYGQNLIRLMAENKRLSAIPAVFEEFKHHVEEHQAIAEVEVTSAQPLNATQIEKIAAAMEKRLARKVKLNCNVDNALIAGVIVRTEDFVIDGSSRGQLTRLANELQL</sequence>
<gene>
    <name evidence="1" type="primary">atpH</name>
    <name type="ordered locus">HI_0482</name>
</gene>
<keyword id="KW-0066">ATP synthesis</keyword>
<keyword id="KW-0997">Cell inner membrane</keyword>
<keyword id="KW-1003">Cell membrane</keyword>
<keyword id="KW-0139">CF(1)</keyword>
<keyword id="KW-0375">Hydrogen ion transport</keyword>
<keyword id="KW-0406">Ion transport</keyword>
<keyword id="KW-0472">Membrane</keyword>
<keyword id="KW-1185">Reference proteome</keyword>
<keyword id="KW-0813">Transport</keyword>